<organism>
    <name type="scientific">Metarhizium robertsii (strain ARSEF 23 / ATCC MYA-3075)</name>
    <name type="common">Metarhizium anisopliae (strain ARSEF 23)</name>
    <dbReference type="NCBI Taxonomy" id="655844"/>
    <lineage>
        <taxon>Eukaryota</taxon>
        <taxon>Fungi</taxon>
        <taxon>Dikarya</taxon>
        <taxon>Ascomycota</taxon>
        <taxon>Pezizomycotina</taxon>
        <taxon>Sordariomycetes</taxon>
        <taxon>Hypocreomycetidae</taxon>
        <taxon>Hypocreales</taxon>
        <taxon>Clavicipitaceae</taxon>
        <taxon>Metarhizium</taxon>
    </lineage>
</organism>
<dbReference type="EC" id="3.4.14.5"/>
<dbReference type="EMBL" id="ADNJ02000003">
    <property type="protein sequence ID" value="EFZ00768.2"/>
    <property type="molecule type" value="Genomic_DNA"/>
</dbReference>
<dbReference type="RefSeq" id="XP_007819553.2">
    <property type="nucleotide sequence ID" value="XM_007821362.2"/>
</dbReference>
<dbReference type="SMR" id="E9ETL5"/>
<dbReference type="ESTHER" id="metar-dapb">
    <property type="family name" value="DPP4N_Peptidase_S9"/>
</dbReference>
<dbReference type="GlyCosmos" id="E9ETL5">
    <property type="glycosylation" value="3 sites, No reported glycans"/>
</dbReference>
<dbReference type="GeneID" id="19257650"/>
<dbReference type="KEGG" id="maj:MAA_03364"/>
<dbReference type="HOGENOM" id="CLU_006105_0_1_1"/>
<dbReference type="OrthoDB" id="16520at2759"/>
<dbReference type="Proteomes" id="UP000002498">
    <property type="component" value="Unassembled WGS sequence"/>
</dbReference>
<dbReference type="GO" id="GO:0005886">
    <property type="term" value="C:plasma membrane"/>
    <property type="evidence" value="ECO:0007669"/>
    <property type="project" value="TreeGrafter"/>
</dbReference>
<dbReference type="GO" id="GO:0005774">
    <property type="term" value="C:vacuolar membrane"/>
    <property type="evidence" value="ECO:0007669"/>
    <property type="project" value="UniProtKB-SubCell"/>
</dbReference>
<dbReference type="GO" id="GO:0004177">
    <property type="term" value="F:aminopeptidase activity"/>
    <property type="evidence" value="ECO:0007669"/>
    <property type="project" value="UniProtKB-KW"/>
</dbReference>
<dbReference type="GO" id="GO:0008239">
    <property type="term" value="F:dipeptidyl-peptidase activity"/>
    <property type="evidence" value="ECO:0007669"/>
    <property type="project" value="UniProtKB-EC"/>
</dbReference>
<dbReference type="GO" id="GO:0008236">
    <property type="term" value="F:serine-type peptidase activity"/>
    <property type="evidence" value="ECO:0007669"/>
    <property type="project" value="UniProtKB-KW"/>
</dbReference>
<dbReference type="GO" id="GO:0006508">
    <property type="term" value="P:proteolysis"/>
    <property type="evidence" value="ECO:0007669"/>
    <property type="project" value="UniProtKB-KW"/>
</dbReference>
<dbReference type="FunFam" id="3.40.50.1820:FF:000003">
    <property type="entry name" value="Dipeptidyl peptidase 4"/>
    <property type="match status" value="1"/>
</dbReference>
<dbReference type="Gene3D" id="3.40.50.1820">
    <property type="entry name" value="alpha/beta hydrolase"/>
    <property type="match status" value="1"/>
</dbReference>
<dbReference type="Gene3D" id="2.140.10.30">
    <property type="entry name" value="Dipeptidylpeptidase IV, N-terminal domain"/>
    <property type="match status" value="1"/>
</dbReference>
<dbReference type="InterPro" id="IPR029058">
    <property type="entry name" value="AB_hydrolase_fold"/>
</dbReference>
<dbReference type="InterPro" id="IPR001375">
    <property type="entry name" value="Peptidase_S9_cat"/>
</dbReference>
<dbReference type="InterPro" id="IPR002469">
    <property type="entry name" value="Peptidase_S9B_N"/>
</dbReference>
<dbReference type="InterPro" id="IPR050278">
    <property type="entry name" value="Serine_Prot_S9B/DPPIV"/>
</dbReference>
<dbReference type="PANTHER" id="PTHR11731:SF200">
    <property type="entry name" value="DIPEPTIDYL PEPTIDASE 10, ISOFORM B"/>
    <property type="match status" value="1"/>
</dbReference>
<dbReference type="PANTHER" id="PTHR11731">
    <property type="entry name" value="PROTEASE FAMILY S9B,C DIPEPTIDYL-PEPTIDASE IV-RELATED"/>
    <property type="match status" value="1"/>
</dbReference>
<dbReference type="Pfam" id="PF00930">
    <property type="entry name" value="DPPIV_N"/>
    <property type="match status" value="1"/>
</dbReference>
<dbReference type="Pfam" id="PF00326">
    <property type="entry name" value="Peptidase_S9"/>
    <property type="match status" value="1"/>
</dbReference>
<dbReference type="SUPFAM" id="SSF53474">
    <property type="entry name" value="alpha/beta-Hydrolases"/>
    <property type="match status" value="1"/>
</dbReference>
<dbReference type="SUPFAM" id="SSF82171">
    <property type="entry name" value="DPP6 N-terminal domain-like"/>
    <property type="match status" value="1"/>
</dbReference>
<evidence type="ECO:0000250" key="1"/>
<evidence type="ECO:0000255" key="2"/>
<evidence type="ECO:0000255" key="3">
    <source>
        <dbReference type="PROSITE-ProRule" id="PRU00498"/>
    </source>
</evidence>
<evidence type="ECO:0000256" key="4">
    <source>
        <dbReference type="SAM" id="MobiDB-lite"/>
    </source>
</evidence>
<evidence type="ECO:0000305" key="5"/>
<accession>E9ETL5</accession>
<reference key="1">
    <citation type="journal article" date="2011" name="PLoS Genet.">
        <title>Genome sequencing and comparative transcriptomics of the model entomopathogenic fungi Metarhizium anisopliae and M. acridum.</title>
        <authorList>
            <person name="Gao Q."/>
            <person name="Jin K."/>
            <person name="Ying S.-H."/>
            <person name="Zhang Y."/>
            <person name="Xiao G."/>
            <person name="Shang Y."/>
            <person name="Duan Z."/>
            <person name="Hu X."/>
            <person name="Xie X.-Q."/>
            <person name="Zhou G."/>
            <person name="Peng G."/>
            <person name="Luo Z."/>
            <person name="Huang W."/>
            <person name="Wang B."/>
            <person name="Fang W."/>
            <person name="Wang S."/>
            <person name="Zhong Y."/>
            <person name="Ma L.-J."/>
            <person name="St Leger R.J."/>
            <person name="Zhao G.-P."/>
            <person name="Pei Y."/>
            <person name="Feng M.-G."/>
            <person name="Xia Y."/>
            <person name="Wang C."/>
        </authorList>
    </citation>
    <scope>NUCLEOTIDE SEQUENCE [LARGE SCALE GENOMIC DNA]</scope>
    <source>
        <strain>ARSEF 23 / ATCC MYA-3075</strain>
    </source>
</reference>
<reference key="2">
    <citation type="journal article" date="2014" name="Proc. Natl. Acad. Sci. U.S.A.">
        <title>Trajectory and genomic determinants of fungal-pathogen speciation and host adaptation.</title>
        <authorList>
            <person name="Hu X."/>
            <person name="Xiao G."/>
            <person name="Zheng P."/>
            <person name="Shang Y."/>
            <person name="Su Y."/>
            <person name="Zhang X."/>
            <person name="Liu X."/>
            <person name="Zhan S."/>
            <person name="St Leger R.J."/>
            <person name="Wang C."/>
        </authorList>
    </citation>
    <scope>GENOME REANNOTATION</scope>
    <source>
        <strain>ARSEF 23 / ATCC MYA-3075</strain>
    </source>
</reference>
<proteinExistence type="inferred from homology"/>
<sequence length="915" mass="102613">MAPPFTDDPESQRPSTSRLSQDSLSSVSTTSLVFDRIQEEMDRDPSASRSARRDLLPATKDEGDFDENASETGAFLGPPGVPLQRQPMDRGFRRILIIIGAVFVGAWLAGLGIFVLSGSYKHESDSEHDPDANSRGSGKAVTMDQVFGGFWSARSHSISWIADPDGGDGLLLEVNTANGYLVVEDVRADKESTDTNAGQTADTQPAKPRVLMRDPYFMYHGEIKRPDWNEPSPDLKKVLLAVKREKNWRHSFQATYFILDVETAQVQPLVPDNVNAKVQLANWSPTSDAISFTMDNNIYIRRLNQANDVVQITKDGGPEYFYGIPDWVYEEEVFAGRSATWWSDDGKYLAFLRTNETAVPEYAIEYYIQRPSGKKPAVGEEAYPEIRKIKYPKPGAHNPVVDVQYYDVSKGDVFSISAPDEFPDHDRIISNVLWAGNKVLLKQSNRIGDFLKVILVDPSQREAKIVNSINIAEIDGGWFEISHTMTYIPADPSKGRQQDGYVDTVIHEGYEHIGYFTPIDNPKPIMLTSGSWEVEDAPSAVDLNNNLVYFVATKESSIQRHVYSVKLDGTNLTPLTNTSSEGYYTVSFSSRSGFALLSYKGPKIPYQKVISTPSIPIQFSRTIEDNADLADKAKKHELPILKYGTLQLPNGISVNYLERRPPHFNPKKKYPILFQQYSGPKSQTVTKKFAVDFQSYVASSLGYLVVTIDPRGTGFLGRQHRVVVRSQLGVLEAQDHIAAAKHYSSLPYVDPSRLAIWGWSYGGFQTLKTLEVDAGDTFSYGMAVAPVTDWRFYDSIYTERYMRLPQDNTAGYDASAVRNATALGMNKRFLIMHGSADDNVHFQNSLKLLDYLDLAGIENYDVHVFPDSDHSIAFHGANRMVYDRLNNWLVNAFNGEWLKIADPKPIDTKKRRHVS</sequence>
<keyword id="KW-0031">Aminopeptidase</keyword>
<keyword id="KW-0325">Glycoprotein</keyword>
<keyword id="KW-0378">Hydrolase</keyword>
<keyword id="KW-0472">Membrane</keyword>
<keyword id="KW-0645">Protease</keyword>
<keyword id="KW-0720">Serine protease</keyword>
<keyword id="KW-0735">Signal-anchor</keyword>
<keyword id="KW-0812">Transmembrane</keyword>
<keyword id="KW-1133">Transmembrane helix</keyword>
<keyword id="KW-0926">Vacuole</keyword>
<gene>
    <name type="primary">DAPB</name>
    <name type="ORF">MAA_03364</name>
</gene>
<comment type="function">
    <text evidence="1">Type IV dipeptidyl-peptidase which removes N-terminal dipeptides sequentially from polypeptides having unsubstituted N-termini provided that the penultimate residue is proline.</text>
</comment>
<comment type="catalytic activity">
    <reaction>
        <text>Release of an N-terminal dipeptide, Xaa-Yaa-|-Zaa-, from a polypeptide, preferentially when Yaa is Pro, provided Zaa is neither Pro nor hydroxyproline.</text>
        <dbReference type="EC" id="3.4.14.5"/>
    </reaction>
</comment>
<comment type="subcellular location">
    <subcellularLocation>
        <location evidence="1">Vacuole membrane</location>
        <topology evidence="1">Single-pass type II membrane protein</topology>
    </subcellularLocation>
    <text evidence="1">Lysosome-like vacuoles.</text>
</comment>
<comment type="similarity">
    <text evidence="5">Belongs to the peptidase S9B family.</text>
</comment>
<feature type="chain" id="PRO_0000412149" description="Probable dipeptidyl-aminopeptidase B">
    <location>
        <begin position="1"/>
        <end position="915"/>
    </location>
</feature>
<feature type="topological domain" description="Cytoplasmic" evidence="2">
    <location>
        <begin position="1"/>
        <end position="94"/>
    </location>
</feature>
<feature type="transmembrane region" description="Helical; Signal-anchor for type II membrane protein" evidence="2">
    <location>
        <begin position="95"/>
        <end position="115"/>
    </location>
</feature>
<feature type="topological domain" description="Vacuolar" evidence="2">
    <location>
        <begin position="116"/>
        <end position="915"/>
    </location>
</feature>
<feature type="region of interest" description="Disordered" evidence="4">
    <location>
        <begin position="1"/>
        <end position="82"/>
    </location>
</feature>
<feature type="compositionally biased region" description="Low complexity" evidence="4">
    <location>
        <begin position="15"/>
        <end position="32"/>
    </location>
</feature>
<feature type="compositionally biased region" description="Basic and acidic residues" evidence="4">
    <location>
        <begin position="36"/>
        <end position="62"/>
    </location>
</feature>
<feature type="active site" description="Charge relay system" evidence="1">
    <location>
        <position position="760"/>
    </location>
</feature>
<feature type="active site" description="Charge relay system" evidence="1">
    <location>
        <position position="837"/>
    </location>
</feature>
<feature type="active site" description="Charge relay system" evidence="1">
    <location>
        <position position="870"/>
    </location>
</feature>
<feature type="glycosylation site" description="N-linked (GlcNAc...) asparagine" evidence="3">
    <location>
        <position position="355"/>
    </location>
</feature>
<feature type="glycosylation site" description="N-linked (GlcNAc...) asparagine" evidence="3">
    <location>
        <position position="577"/>
    </location>
</feature>
<feature type="glycosylation site" description="N-linked (GlcNAc...) asparagine" evidence="3">
    <location>
        <position position="819"/>
    </location>
</feature>
<protein>
    <recommendedName>
        <fullName>Probable dipeptidyl-aminopeptidase B</fullName>
        <shortName>DPAP B</shortName>
        <ecNumber>3.4.14.5</ecNumber>
    </recommendedName>
</protein>
<name>DAPB_METRA</name>